<reference key="1">
    <citation type="submission" date="2009-01" db="EMBL/GenBank/DDBJ databases">
        <title>Complete sequence of Diaphorobacter sp. TPSY.</title>
        <authorList>
            <consortium name="US DOE Joint Genome Institute"/>
            <person name="Lucas S."/>
            <person name="Copeland A."/>
            <person name="Lapidus A."/>
            <person name="Glavina del Rio T."/>
            <person name="Tice H."/>
            <person name="Bruce D."/>
            <person name="Goodwin L."/>
            <person name="Pitluck S."/>
            <person name="Chertkov O."/>
            <person name="Brettin T."/>
            <person name="Detter J.C."/>
            <person name="Han C."/>
            <person name="Larimer F."/>
            <person name="Land M."/>
            <person name="Hauser L."/>
            <person name="Kyrpides N."/>
            <person name="Mikhailova N."/>
            <person name="Coates J.D."/>
        </authorList>
    </citation>
    <scope>NUCLEOTIDE SEQUENCE [LARGE SCALE GENOMIC DNA]</scope>
    <source>
        <strain>TPSY</strain>
    </source>
</reference>
<organism>
    <name type="scientific">Acidovorax ebreus (strain TPSY)</name>
    <name type="common">Diaphorobacter sp. (strain TPSY)</name>
    <dbReference type="NCBI Taxonomy" id="535289"/>
    <lineage>
        <taxon>Bacteria</taxon>
        <taxon>Pseudomonadati</taxon>
        <taxon>Pseudomonadota</taxon>
        <taxon>Betaproteobacteria</taxon>
        <taxon>Burkholderiales</taxon>
        <taxon>Comamonadaceae</taxon>
        <taxon>Diaphorobacter</taxon>
    </lineage>
</organism>
<comment type="function">
    <text evidence="1">Protease subunit of a proteasome-like degradation complex believed to be a general protein degrading machinery.</text>
</comment>
<comment type="catalytic activity">
    <reaction evidence="1">
        <text>ATP-dependent cleavage of peptide bonds with broad specificity.</text>
        <dbReference type="EC" id="3.4.25.2"/>
    </reaction>
</comment>
<comment type="activity regulation">
    <text evidence="1">Allosterically activated by HslU binding.</text>
</comment>
<comment type="subunit">
    <text evidence="1">A double ring-shaped homohexamer of HslV is capped on each side by a ring-shaped HslU homohexamer. The assembly of the HslU/HslV complex is dependent on binding of ATP.</text>
</comment>
<comment type="subcellular location">
    <subcellularLocation>
        <location evidence="1">Cytoplasm</location>
    </subcellularLocation>
</comment>
<comment type="similarity">
    <text evidence="1">Belongs to the peptidase T1B family. HslV subfamily.</text>
</comment>
<sequence length="181" mass="19452">MEQYHGTTILSVRRQTADGIQVALGGDGQVTLGNIVVKGTARKVRKLYQGRVLAGFAGATADAFTLFERFEAKLEKHQGQLTRAAIELTKDWRTDRVLRRLEAMLAVADHSASLIITGNGDVLEPEQGIVAIGSGGAYAHSAAKALLSNTDLPAAEIVKKSLEIAGELCIYTNMHHTIETL</sequence>
<feature type="chain" id="PRO_1000125405" description="ATP-dependent protease subunit HslV">
    <location>
        <begin position="1"/>
        <end position="181"/>
    </location>
</feature>
<feature type="active site" evidence="1">
    <location>
        <position position="7"/>
    </location>
</feature>
<feature type="binding site" evidence="1">
    <location>
        <position position="166"/>
    </location>
    <ligand>
        <name>Na(+)</name>
        <dbReference type="ChEBI" id="CHEBI:29101"/>
    </ligand>
</feature>
<feature type="binding site" evidence="1">
    <location>
        <position position="169"/>
    </location>
    <ligand>
        <name>Na(+)</name>
        <dbReference type="ChEBI" id="CHEBI:29101"/>
    </ligand>
</feature>
<feature type="binding site" evidence="1">
    <location>
        <position position="172"/>
    </location>
    <ligand>
        <name>Na(+)</name>
        <dbReference type="ChEBI" id="CHEBI:29101"/>
    </ligand>
</feature>
<gene>
    <name evidence="1" type="primary">hslV</name>
    <name type="ordered locus">Dtpsy_2991</name>
</gene>
<name>HSLV_ACIET</name>
<dbReference type="EC" id="3.4.25.2" evidence="1"/>
<dbReference type="EMBL" id="CP001392">
    <property type="protein sequence ID" value="ACM34424.1"/>
    <property type="molecule type" value="Genomic_DNA"/>
</dbReference>
<dbReference type="RefSeq" id="WP_015914271.1">
    <property type="nucleotide sequence ID" value="NC_011992.1"/>
</dbReference>
<dbReference type="SMR" id="B9MFS3"/>
<dbReference type="MEROPS" id="T01.007"/>
<dbReference type="KEGG" id="dia:Dtpsy_2991"/>
<dbReference type="eggNOG" id="COG5405">
    <property type="taxonomic scope" value="Bacteria"/>
</dbReference>
<dbReference type="HOGENOM" id="CLU_093872_1_0_4"/>
<dbReference type="Proteomes" id="UP000000450">
    <property type="component" value="Chromosome"/>
</dbReference>
<dbReference type="GO" id="GO:0009376">
    <property type="term" value="C:HslUV protease complex"/>
    <property type="evidence" value="ECO:0007669"/>
    <property type="project" value="UniProtKB-UniRule"/>
</dbReference>
<dbReference type="GO" id="GO:0005839">
    <property type="term" value="C:proteasome core complex"/>
    <property type="evidence" value="ECO:0007669"/>
    <property type="project" value="InterPro"/>
</dbReference>
<dbReference type="GO" id="GO:0046872">
    <property type="term" value="F:metal ion binding"/>
    <property type="evidence" value="ECO:0007669"/>
    <property type="project" value="UniProtKB-KW"/>
</dbReference>
<dbReference type="GO" id="GO:0004298">
    <property type="term" value="F:threonine-type endopeptidase activity"/>
    <property type="evidence" value="ECO:0007669"/>
    <property type="project" value="UniProtKB-KW"/>
</dbReference>
<dbReference type="GO" id="GO:0051603">
    <property type="term" value="P:proteolysis involved in protein catabolic process"/>
    <property type="evidence" value="ECO:0007669"/>
    <property type="project" value="InterPro"/>
</dbReference>
<dbReference type="CDD" id="cd01913">
    <property type="entry name" value="protease_HslV"/>
    <property type="match status" value="1"/>
</dbReference>
<dbReference type="FunFam" id="3.60.20.10:FF:000002">
    <property type="entry name" value="ATP-dependent protease subunit HslV"/>
    <property type="match status" value="1"/>
</dbReference>
<dbReference type="Gene3D" id="3.60.20.10">
    <property type="entry name" value="Glutamine Phosphoribosylpyrophosphate, subunit 1, domain 1"/>
    <property type="match status" value="1"/>
</dbReference>
<dbReference type="HAMAP" id="MF_00248">
    <property type="entry name" value="HslV"/>
    <property type="match status" value="1"/>
</dbReference>
<dbReference type="InterPro" id="IPR022281">
    <property type="entry name" value="ATP-dep_Prtase_HsIV_su"/>
</dbReference>
<dbReference type="InterPro" id="IPR029055">
    <property type="entry name" value="Ntn_hydrolases_N"/>
</dbReference>
<dbReference type="InterPro" id="IPR001353">
    <property type="entry name" value="Proteasome_sua/b"/>
</dbReference>
<dbReference type="InterPro" id="IPR023333">
    <property type="entry name" value="Proteasome_suB-type"/>
</dbReference>
<dbReference type="NCBIfam" id="TIGR03692">
    <property type="entry name" value="ATP_dep_HslV"/>
    <property type="match status" value="1"/>
</dbReference>
<dbReference type="NCBIfam" id="NF003964">
    <property type="entry name" value="PRK05456.1"/>
    <property type="match status" value="1"/>
</dbReference>
<dbReference type="PANTHER" id="PTHR32194:SF0">
    <property type="entry name" value="ATP-DEPENDENT PROTEASE SUBUNIT HSLV"/>
    <property type="match status" value="1"/>
</dbReference>
<dbReference type="PANTHER" id="PTHR32194">
    <property type="entry name" value="METALLOPROTEASE TLDD"/>
    <property type="match status" value="1"/>
</dbReference>
<dbReference type="Pfam" id="PF00227">
    <property type="entry name" value="Proteasome"/>
    <property type="match status" value="1"/>
</dbReference>
<dbReference type="PIRSF" id="PIRSF039093">
    <property type="entry name" value="HslV"/>
    <property type="match status" value="1"/>
</dbReference>
<dbReference type="SUPFAM" id="SSF56235">
    <property type="entry name" value="N-terminal nucleophile aminohydrolases (Ntn hydrolases)"/>
    <property type="match status" value="1"/>
</dbReference>
<dbReference type="PROSITE" id="PS51476">
    <property type="entry name" value="PROTEASOME_BETA_2"/>
    <property type="match status" value="1"/>
</dbReference>
<evidence type="ECO:0000255" key="1">
    <source>
        <dbReference type="HAMAP-Rule" id="MF_00248"/>
    </source>
</evidence>
<accession>B9MFS3</accession>
<protein>
    <recommendedName>
        <fullName evidence="1">ATP-dependent protease subunit HslV</fullName>
        <ecNumber evidence="1">3.4.25.2</ecNumber>
    </recommendedName>
</protein>
<proteinExistence type="inferred from homology"/>
<keyword id="KW-0021">Allosteric enzyme</keyword>
<keyword id="KW-0963">Cytoplasm</keyword>
<keyword id="KW-0378">Hydrolase</keyword>
<keyword id="KW-0479">Metal-binding</keyword>
<keyword id="KW-0645">Protease</keyword>
<keyword id="KW-1185">Reference proteome</keyword>
<keyword id="KW-0915">Sodium</keyword>
<keyword id="KW-0888">Threonine protease</keyword>